<evidence type="ECO:0000255" key="1">
    <source>
        <dbReference type="HAMAP-Rule" id="MF_01073"/>
    </source>
</evidence>
<feature type="chain" id="PRO_1000136664" description="Macrodomain Ter protein">
    <location>
        <begin position="1"/>
        <end position="150"/>
    </location>
</feature>
<keyword id="KW-0131">Cell cycle</keyword>
<keyword id="KW-0132">Cell division</keyword>
<keyword id="KW-0963">Cytoplasm</keyword>
<keyword id="KW-0238">DNA-binding</keyword>
<protein>
    <recommendedName>
        <fullName evidence="1">Macrodomain Ter protein</fullName>
    </recommendedName>
</protein>
<sequence>MKYQQLENLESGWKWKYLVKKHREGELITRYIEASAAQEAVDVLLSLENEPVLVNGWIDKHMNPELVNRMKQTIRARRKRHFNAEHQHTRKKSIDLEFIVWQRLAGLAQRRGKTLSETIVQLIEDAENKEKYANKMSSLKQDLQALLGKE</sequence>
<gene>
    <name evidence="1" type="primary">matP</name>
    <name type="ordered locus">ECIAI39_2191</name>
</gene>
<accession>B7NM18</accession>
<proteinExistence type="inferred from homology"/>
<name>MATP_ECO7I</name>
<organism>
    <name type="scientific">Escherichia coli O7:K1 (strain IAI39 / ExPEC)</name>
    <dbReference type="NCBI Taxonomy" id="585057"/>
    <lineage>
        <taxon>Bacteria</taxon>
        <taxon>Pseudomonadati</taxon>
        <taxon>Pseudomonadota</taxon>
        <taxon>Gammaproteobacteria</taxon>
        <taxon>Enterobacterales</taxon>
        <taxon>Enterobacteriaceae</taxon>
        <taxon>Escherichia</taxon>
    </lineage>
</organism>
<reference key="1">
    <citation type="journal article" date="2009" name="PLoS Genet.">
        <title>Organised genome dynamics in the Escherichia coli species results in highly diverse adaptive paths.</title>
        <authorList>
            <person name="Touchon M."/>
            <person name="Hoede C."/>
            <person name="Tenaillon O."/>
            <person name="Barbe V."/>
            <person name="Baeriswyl S."/>
            <person name="Bidet P."/>
            <person name="Bingen E."/>
            <person name="Bonacorsi S."/>
            <person name="Bouchier C."/>
            <person name="Bouvet O."/>
            <person name="Calteau A."/>
            <person name="Chiapello H."/>
            <person name="Clermont O."/>
            <person name="Cruveiller S."/>
            <person name="Danchin A."/>
            <person name="Diard M."/>
            <person name="Dossat C."/>
            <person name="Karoui M.E."/>
            <person name="Frapy E."/>
            <person name="Garry L."/>
            <person name="Ghigo J.M."/>
            <person name="Gilles A.M."/>
            <person name="Johnson J."/>
            <person name="Le Bouguenec C."/>
            <person name="Lescat M."/>
            <person name="Mangenot S."/>
            <person name="Martinez-Jehanne V."/>
            <person name="Matic I."/>
            <person name="Nassif X."/>
            <person name="Oztas S."/>
            <person name="Petit M.A."/>
            <person name="Pichon C."/>
            <person name="Rouy Z."/>
            <person name="Ruf C.S."/>
            <person name="Schneider D."/>
            <person name="Tourret J."/>
            <person name="Vacherie B."/>
            <person name="Vallenet D."/>
            <person name="Medigue C."/>
            <person name="Rocha E.P.C."/>
            <person name="Denamur E."/>
        </authorList>
    </citation>
    <scope>NUCLEOTIDE SEQUENCE [LARGE SCALE GENOMIC DNA]</scope>
    <source>
        <strain>IAI39 / ExPEC</strain>
    </source>
</reference>
<comment type="function">
    <text evidence="1">Required for spatial organization of the terminus region of the chromosome (Ter macrodomain) during the cell cycle. Prevents early segregation of duplicated Ter macrodomains during cell division. Binds specifically to matS, which is a 13 bp signature motif repeated within the Ter macrodomain.</text>
</comment>
<comment type="subunit">
    <text evidence="1">Homodimer.</text>
</comment>
<comment type="subcellular location">
    <subcellularLocation>
        <location evidence="1">Cytoplasm</location>
    </subcellularLocation>
</comment>
<comment type="similarity">
    <text evidence="1">Belongs to the MatP family.</text>
</comment>
<dbReference type="EMBL" id="CU928164">
    <property type="protein sequence ID" value="CAR18318.1"/>
    <property type="molecule type" value="Genomic_DNA"/>
</dbReference>
<dbReference type="RefSeq" id="WP_000877161.1">
    <property type="nucleotide sequence ID" value="NC_011750.1"/>
</dbReference>
<dbReference type="RefSeq" id="YP_002408154.1">
    <property type="nucleotide sequence ID" value="NC_011750.1"/>
</dbReference>
<dbReference type="SMR" id="B7NM18"/>
<dbReference type="STRING" id="585057.ECIAI39_2191"/>
<dbReference type="GeneID" id="93776458"/>
<dbReference type="KEGG" id="ect:ECIAI39_2191"/>
<dbReference type="PATRIC" id="fig|585057.6.peg.2282"/>
<dbReference type="HOGENOM" id="CLU_142157_0_0_6"/>
<dbReference type="Proteomes" id="UP000000749">
    <property type="component" value="Chromosome"/>
</dbReference>
<dbReference type="GO" id="GO:0005737">
    <property type="term" value="C:cytoplasm"/>
    <property type="evidence" value="ECO:0007669"/>
    <property type="project" value="UniProtKB-SubCell"/>
</dbReference>
<dbReference type="GO" id="GO:0043565">
    <property type="term" value="F:sequence-specific DNA binding"/>
    <property type="evidence" value="ECO:0007669"/>
    <property type="project" value="UniProtKB-UniRule"/>
</dbReference>
<dbReference type="GO" id="GO:0051301">
    <property type="term" value="P:cell division"/>
    <property type="evidence" value="ECO:0007669"/>
    <property type="project" value="UniProtKB-UniRule"/>
</dbReference>
<dbReference type="GO" id="GO:0006355">
    <property type="term" value="P:regulation of DNA-templated transcription"/>
    <property type="evidence" value="ECO:0007669"/>
    <property type="project" value="InterPro"/>
</dbReference>
<dbReference type="FunFam" id="1.10.1220.10:FF:000004">
    <property type="entry name" value="Macrodomain Ter protein"/>
    <property type="match status" value="1"/>
</dbReference>
<dbReference type="FunFam" id="1.20.1270.380:FF:000001">
    <property type="entry name" value="Macrodomain Ter protein"/>
    <property type="match status" value="1"/>
</dbReference>
<dbReference type="Gene3D" id="1.20.1270.380">
    <property type="entry name" value="MatP, N-terminal domain"/>
    <property type="match status" value="1"/>
</dbReference>
<dbReference type="Gene3D" id="1.10.1220.10">
    <property type="entry name" value="Met repressor-like"/>
    <property type="match status" value="1"/>
</dbReference>
<dbReference type="HAMAP" id="MF_01073">
    <property type="entry name" value="MatP"/>
    <property type="match status" value="1"/>
</dbReference>
<dbReference type="InterPro" id="IPR013321">
    <property type="entry name" value="Arc_rbn_hlx_hlx"/>
</dbReference>
<dbReference type="InterPro" id="IPR009390">
    <property type="entry name" value="MatP"/>
</dbReference>
<dbReference type="InterPro" id="IPR035375">
    <property type="entry name" value="MatP_C"/>
</dbReference>
<dbReference type="InterPro" id="IPR035087">
    <property type="entry name" value="MatP_N"/>
</dbReference>
<dbReference type="InterPro" id="IPR038339">
    <property type="entry name" value="MatP_N_sf"/>
</dbReference>
<dbReference type="NCBIfam" id="NF003471">
    <property type="entry name" value="PRK05097.1"/>
    <property type="match status" value="1"/>
</dbReference>
<dbReference type="Pfam" id="PF06303">
    <property type="entry name" value="MatP"/>
    <property type="match status" value="1"/>
</dbReference>
<dbReference type="Pfam" id="PF17414">
    <property type="entry name" value="MatP_C"/>
    <property type="match status" value="1"/>
</dbReference>